<proteinExistence type="inferred from homology"/>
<name>RR4_SISST</name>
<keyword id="KW-0150">Chloroplast</keyword>
<keyword id="KW-0934">Plastid</keyword>
<keyword id="KW-0687">Ribonucleoprotein</keyword>
<keyword id="KW-0689">Ribosomal protein</keyword>
<keyword id="KW-0694">RNA-binding</keyword>
<keyword id="KW-0699">rRNA-binding</keyword>
<dbReference type="EMBL" id="Z68263">
    <property type="protein sequence ID" value="CAA92561.1"/>
    <property type="molecule type" value="Genomic_DNA"/>
</dbReference>
<dbReference type="SMR" id="P69652"/>
<dbReference type="GO" id="GO:0009507">
    <property type="term" value="C:chloroplast"/>
    <property type="evidence" value="ECO:0007669"/>
    <property type="project" value="UniProtKB-SubCell"/>
</dbReference>
<dbReference type="GO" id="GO:0015935">
    <property type="term" value="C:small ribosomal subunit"/>
    <property type="evidence" value="ECO:0007669"/>
    <property type="project" value="InterPro"/>
</dbReference>
<dbReference type="GO" id="GO:0019843">
    <property type="term" value="F:rRNA binding"/>
    <property type="evidence" value="ECO:0007669"/>
    <property type="project" value="UniProtKB-KW"/>
</dbReference>
<dbReference type="GO" id="GO:0003735">
    <property type="term" value="F:structural constituent of ribosome"/>
    <property type="evidence" value="ECO:0007669"/>
    <property type="project" value="InterPro"/>
</dbReference>
<dbReference type="GO" id="GO:0042274">
    <property type="term" value="P:ribosomal small subunit biogenesis"/>
    <property type="evidence" value="ECO:0007669"/>
    <property type="project" value="TreeGrafter"/>
</dbReference>
<dbReference type="GO" id="GO:0006412">
    <property type="term" value="P:translation"/>
    <property type="evidence" value="ECO:0007669"/>
    <property type="project" value="InterPro"/>
</dbReference>
<dbReference type="CDD" id="cd00165">
    <property type="entry name" value="S4"/>
    <property type="match status" value="1"/>
</dbReference>
<dbReference type="FunFam" id="1.10.1050.10:FF:000002">
    <property type="entry name" value="30S ribosomal protein S4, chloroplastic"/>
    <property type="match status" value="1"/>
</dbReference>
<dbReference type="FunFam" id="3.10.290.10:FF:000081">
    <property type="entry name" value="30S ribosomal protein S4, chloroplastic"/>
    <property type="match status" value="1"/>
</dbReference>
<dbReference type="Gene3D" id="1.10.1050.10">
    <property type="entry name" value="Ribosomal Protein S4 Delta 41, Chain A, domain 1"/>
    <property type="match status" value="1"/>
</dbReference>
<dbReference type="Gene3D" id="3.10.290.10">
    <property type="entry name" value="RNA-binding S4 domain"/>
    <property type="match status" value="1"/>
</dbReference>
<dbReference type="HAMAP" id="MF_01306_B">
    <property type="entry name" value="Ribosomal_uS4_B"/>
    <property type="match status" value="1"/>
</dbReference>
<dbReference type="InterPro" id="IPR022801">
    <property type="entry name" value="Ribosomal_uS4"/>
</dbReference>
<dbReference type="InterPro" id="IPR005709">
    <property type="entry name" value="Ribosomal_uS4_bac-type"/>
</dbReference>
<dbReference type="InterPro" id="IPR018079">
    <property type="entry name" value="Ribosomal_uS4_CS"/>
</dbReference>
<dbReference type="InterPro" id="IPR001912">
    <property type="entry name" value="Ribosomal_uS4_N"/>
</dbReference>
<dbReference type="InterPro" id="IPR002942">
    <property type="entry name" value="S4_RNA-bd"/>
</dbReference>
<dbReference type="InterPro" id="IPR036986">
    <property type="entry name" value="S4_RNA-bd_sf"/>
</dbReference>
<dbReference type="NCBIfam" id="NF003717">
    <property type="entry name" value="PRK05327.1"/>
    <property type="match status" value="1"/>
</dbReference>
<dbReference type="NCBIfam" id="TIGR01017">
    <property type="entry name" value="rpsD_bact"/>
    <property type="match status" value="1"/>
</dbReference>
<dbReference type="PANTHER" id="PTHR11831">
    <property type="entry name" value="30S 40S RIBOSOMAL PROTEIN"/>
    <property type="match status" value="1"/>
</dbReference>
<dbReference type="PANTHER" id="PTHR11831:SF4">
    <property type="entry name" value="SMALL RIBOSOMAL SUBUNIT PROTEIN US4M"/>
    <property type="match status" value="1"/>
</dbReference>
<dbReference type="Pfam" id="PF00163">
    <property type="entry name" value="Ribosomal_S4"/>
    <property type="match status" value="1"/>
</dbReference>
<dbReference type="Pfam" id="PF01479">
    <property type="entry name" value="S4"/>
    <property type="match status" value="1"/>
</dbReference>
<dbReference type="SMART" id="SM01390">
    <property type="entry name" value="Ribosomal_S4"/>
    <property type="match status" value="1"/>
</dbReference>
<dbReference type="SMART" id="SM00363">
    <property type="entry name" value="S4"/>
    <property type="match status" value="1"/>
</dbReference>
<dbReference type="SUPFAM" id="SSF55174">
    <property type="entry name" value="Alpha-L RNA-binding motif"/>
    <property type="match status" value="1"/>
</dbReference>
<dbReference type="PROSITE" id="PS00632">
    <property type="entry name" value="RIBOSOMAL_S4"/>
    <property type="match status" value="1"/>
</dbReference>
<dbReference type="PROSITE" id="PS50889">
    <property type="entry name" value="S4"/>
    <property type="match status" value="1"/>
</dbReference>
<organism>
    <name type="scientific">Sisyrinchium striatum</name>
    <name type="common">Satin flower</name>
    <dbReference type="NCBI Taxonomy" id="59001"/>
    <lineage>
        <taxon>Eukaryota</taxon>
        <taxon>Viridiplantae</taxon>
        <taxon>Streptophyta</taxon>
        <taxon>Embryophyta</taxon>
        <taxon>Tracheophyta</taxon>
        <taxon>Spermatophyta</taxon>
        <taxon>Magnoliopsida</taxon>
        <taxon>Liliopsida</taxon>
        <taxon>Asparagales</taxon>
        <taxon>Iridaceae</taxon>
        <taxon>Iridoideae</taxon>
        <taxon>Sisyrinchieae</taxon>
        <taxon>Sisyrinchium</taxon>
    </lineage>
</organism>
<protein>
    <recommendedName>
        <fullName evidence="2">Small ribosomal subunit protein uS4c</fullName>
    </recommendedName>
    <alternativeName>
        <fullName>30S ribosomal protein S4, chloroplastic</fullName>
    </alternativeName>
</protein>
<gene>
    <name type="primary">rps4</name>
</gene>
<feature type="chain" id="PRO_0000132666" description="Small ribosomal subunit protein uS4c">
    <location>
        <begin position="1" status="less than"/>
        <end position="194" status="greater than"/>
    </location>
</feature>
<feature type="domain" description="S4 RNA-binding">
    <location>
        <begin position="82"/>
        <end position="143"/>
    </location>
</feature>
<feature type="non-terminal residue">
    <location>
        <position position="1"/>
    </location>
</feature>
<feature type="non-terminal residue">
    <location>
        <position position="194"/>
    </location>
</feature>
<geneLocation type="chloroplast"/>
<evidence type="ECO:0000250" key="1"/>
<evidence type="ECO:0000305" key="2"/>
<accession>P69652</accession>
<accession>O20284</accession>
<accession>O36055</accession>
<reference key="1">
    <citation type="journal article" date="1997" name="Plant Syst. Evol.">
        <title>Phylogenetic analysis of Iridaceae with parsimony and distance methods using the plastid gene rps4.</title>
        <authorList>
            <person name="Souza-Chies T.T."/>
            <person name="Bittar G."/>
            <person name="Nadot S."/>
            <person name="Carter L."/>
            <person name="Besin E."/>
            <person name="Lejeune B.P."/>
        </authorList>
    </citation>
    <scope>NUCLEOTIDE SEQUENCE [GENOMIC DNA]</scope>
</reference>
<sequence>RFKKIRRLGALPGLTNKRPRSGSDLKNQLRSGKRSQYRIRLEEKQKLRFHYGLTERQLLKYVHIAGKAKGSTGQVLLQLLEMRLDNILFRLGMASTIPGARQLVNHRHILVNGRIVDIPSYRCKPRDIITTKDKQRSKALIQNSIASSPHEELPNHLTIDLFQYKGLVNQIIDSKWIGLKINELLVVEYYSRQT</sequence>
<comment type="function">
    <text evidence="1">One of the primary rRNA binding proteins, it binds directly to 16S rRNA where it nucleates assembly of the body of the 30S subunit.</text>
</comment>
<comment type="function">
    <text evidence="1">With S5 and S12 plays an important role in translational accuracy.</text>
</comment>
<comment type="subunit">
    <text evidence="1">Part of the 30S ribosomal subunit. Contacts protein S5. The interaction surface between S4 and S5 is involved in control of translational fidelity (By similarity).</text>
</comment>
<comment type="subcellular location">
    <subcellularLocation>
        <location>Plastid</location>
        <location>Chloroplast</location>
    </subcellularLocation>
</comment>
<comment type="similarity">
    <text evidence="2">Belongs to the universal ribosomal protein uS4 family.</text>
</comment>